<protein>
    <recommendedName>
        <fullName evidence="1">Argininosuccinate lyase</fullName>
        <shortName evidence="1">ASAL</shortName>
        <ecNumber evidence="1">4.3.2.1</ecNumber>
    </recommendedName>
    <alternativeName>
        <fullName evidence="1">Arginosuccinase</fullName>
    </alternativeName>
</protein>
<keyword id="KW-0028">Amino-acid biosynthesis</keyword>
<keyword id="KW-0055">Arginine biosynthesis</keyword>
<keyword id="KW-0963">Cytoplasm</keyword>
<keyword id="KW-0456">Lyase</keyword>
<dbReference type="EC" id="4.3.2.1" evidence="1"/>
<dbReference type="EMBL" id="AP009044">
    <property type="protein sequence ID" value="BAF54455.1"/>
    <property type="molecule type" value="Genomic_DNA"/>
</dbReference>
<dbReference type="RefSeq" id="WP_003858676.1">
    <property type="nucleotide sequence ID" value="NC_009342.1"/>
</dbReference>
<dbReference type="SMR" id="A4QDZ5"/>
<dbReference type="KEGG" id="cgt:cgR_1464"/>
<dbReference type="HOGENOM" id="CLU_027272_2_2_11"/>
<dbReference type="PhylomeDB" id="A4QDZ5"/>
<dbReference type="UniPathway" id="UPA00068">
    <property type="reaction ID" value="UER00114"/>
</dbReference>
<dbReference type="Proteomes" id="UP000006698">
    <property type="component" value="Chromosome"/>
</dbReference>
<dbReference type="GO" id="GO:0005829">
    <property type="term" value="C:cytosol"/>
    <property type="evidence" value="ECO:0007669"/>
    <property type="project" value="TreeGrafter"/>
</dbReference>
<dbReference type="GO" id="GO:0004056">
    <property type="term" value="F:argininosuccinate lyase activity"/>
    <property type="evidence" value="ECO:0007669"/>
    <property type="project" value="UniProtKB-UniRule"/>
</dbReference>
<dbReference type="GO" id="GO:0042450">
    <property type="term" value="P:arginine biosynthetic process via ornithine"/>
    <property type="evidence" value="ECO:0007669"/>
    <property type="project" value="InterPro"/>
</dbReference>
<dbReference type="GO" id="GO:0006526">
    <property type="term" value="P:L-arginine biosynthetic process"/>
    <property type="evidence" value="ECO:0007669"/>
    <property type="project" value="UniProtKB-UniRule"/>
</dbReference>
<dbReference type="CDD" id="cd01359">
    <property type="entry name" value="Argininosuccinate_lyase"/>
    <property type="match status" value="1"/>
</dbReference>
<dbReference type="FunFam" id="1.10.40.30:FF:000001">
    <property type="entry name" value="Argininosuccinate lyase"/>
    <property type="match status" value="1"/>
</dbReference>
<dbReference type="FunFam" id="1.20.200.10:FF:000015">
    <property type="entry name" value="argininosuccinate lyase isoform X2"/>
    <property type="match status" value="1"/>
</dbReference>
<dbReference type="Gene3D" id="1.10.40.30">
    <property type="entry name" value="Fumarase/aspartase (C-terminal domain)"/>
    <property type="match status" value="1"/>
</dbReference>
<dbReference type="Gene3D" id="1.20.200.10">
    <property type="entry name" value="Fumarase/aspartase (Central domain)"/>
    <property type="match status" value="1"/>
</dbReference>
<dbReference type="Gene3D" id="1.10.275.10">
    <property type="entry name" value="Fumarase/aspartase (N-terminal domain)"/>
    <property type="match status" value="1"/>
</dbReference>
<dbReference type="HAMAP" id="MF_00006">
    <property type="entry name" value="Arg_succ_lyase"/>
    <property type="match status" value="1"/>
</dbReference>
<dbReference type="InterPro" id="IPR029419">
    <property type="entry name" value="Arg_succ_lyase_C"/>
</dbReference>
<dbReference type="InterPro" id="IPR009049">
    <property type="entry name" value="Argininosuccinate_lyase"/>
</dbReference>
<dbReference type="InterPro" id="IPR024083">
    <property type="entry name" value="Fumarase/histidase_N"/>
</dbReference>
<dbReference type="InterPro" id="IPR020557">
    <property type="entry name" value="Fumarate_lyase_CS"/>
</dbReference>
<dbReference type="InterPro" id="IPR000362">
    <property type="entry name" value="Fumarate_lyase_fam"/>
</dbReference>
<dbReference type="InterPro" id="IPR022761">
    <property type="entry name" value="Fumarate_lyase_N"/>
</dbReference>
<dbReference type="InterPro" id="IPR008948">
    <property type="entry name" value="L-Aspartase-like"/>
</dbReference>
<dbReference type="NCBIfam" id="TIGR00838">
    <property type="entry name" value="argH"/>
    <property type="match status" value="1"/>
</dbReference>
<dbReference type="PANTHER" id="PTHR43814">
    <property type="entry name" value="ARGININOSUCCINATE LYASE"/>
    <property type="match status" value="1"/>
</dbReference>
<dbReference type="PANTHER" id="PTHR43814:SF1">
    <property type="entry name" value="ARGININOSUCCINATE LYASE"/>
    <property type="match status" value="1"/>
</dbReference>
<dbReference type="Pfam" id="PF14698">
    <property type="entry name" value="ASL_C2"/>
    <property type="match status" value="1"/>
</dbReference>
<dbReference type="Pfam" id="PF00206">
    <property type="entry name" value="Lyase_1"/>
    <property type="match status" value="1"/>
</dbReference>
<dbReference type="PRINTS" id="PR00145">
    <property type="entry name" value="ARGSUCLYASE"/>
</dbReference>
<dbReference type="PRINTS" id="PR00149">
    <property type="entry name" value="FUMRATELYASE"/>
</dbReference>
<dbReference type="SUPFAM" id="SSF48557">
    <property type="entry name" value="L-aspartase-like"/>
    <property type="match status" value="1"/>
</dbReference>
<dbReference type="PROSITE" id="PS00163">
    <property type="entry name" value="FUMARATE_LYASES"/>
    <property type="match status" value="1"/>
</dbReference>
<reference key="1">
    <citation type="journal article" date="2007" name="Microbiology">
        <title>Comparative analysis of the Corynebacterium glutamicum group and complete genome sequence of strain R.</title>
        <authorList>
            <person name="Yukawa H."/>
            <person name="Omumasaba C.A."/>
            <person name="Nonaka H."/>
            <person name="Kos P."/>
            <person name="Okai N."/>
            <person name="Suzuki N."/>
            <person name="Suda M."/>
            <person name="Tsuge Y."/>
            <person name="Watanabe J."/>
            <person name="Ikeda Y."/>
            <person name="Vertes A.A."/>
            <person name="Inui M."/>
        </authorList>
    </citation>
    <scope>NUCLEOTIDE SEQUENCE [LARGE SCALE GENOMIC DNA]</scope>
    <source>
        <strain>R</strain>
    </source>
</reference>
<accession>A4QDZ5</accession>
<feature type="chain" id="PRO_1000000473" description="Argininosuccinate lyase">
    <location>
        <begin position="1"/>
        <end position="477"/>
    </location>
</feature>
<gene>
    <name evidence="1" type="primary">argH</name>
    <name type="ordered locus">cgR_1464</name>
</gene>
<proteinExistence type="inferred from homology"/>
<evidence type="ECO:0000255" key="1">
    <source>
        <dbReference type="HAMAP-Rule" id="MF_00006"/>
    </source>
</evidence>
<organism>
    <name type="scientific">Corynebacterium glutamicum (strain R)</name>
    <dbReference type="NCBI Taxonomy" id="340322"/>
    <lineage>
        <taxon>Bacteria</taxon>
        <taxon>Bacillati</taxon>
        <taxon>Actinomycetota</taxon>
        <taxon>Actinomycetes</taxon>
        <taxon>Mycobacteriales</taxon>
        <taxon>Corynebacteriaceae</taxon>
        <taxon>Corynebacterium</taxon>
    </lineage>
</organism>
<comment type="catalytic activity">
    <reaction evidence="1">
        <text>2-(N(omega)-L-arginino)succinate = fumarate + L-arginine</text>
        <dbReference type="Rhea" id="RHEA:24020"/>
        <dbReference type="ChEBI" id="CHEBI:29806"/>
        <dbReference type="ChEBI" id="CHEBI:32682"/>
        <dbReference type="ChEBI" id="CHEBI:57472"/>
        <dbReference type="EC" id="4.3.2.1"/>
    </reaction>
</comment>
<comment type="pathway">
    <text evidence="1">Amino-acid biosynthesis; L-arginine biosynthesis; L-arginine from L-ornithine and carbamoyl phosphate: step 3/3.</text>
</comment>
<comment type="subcellular location">
    <subcellularLocation>
        <location evidence="1">Cytoplasm</location>
    </subcellularLocation>
</comment>
<comment type="similarity">
    <text evidence="1">Belongs to the lyase 1 family. Argininosuccinate lyase subfamily.</text>
</comment>
<name>ARLY_CORGB</name>
<sequence>MEQHGTNEGALWGGRFSGGPSEAMFALSVSTHFDWVLAPYDVLASKAHAKVLHQAELLSDEDLATMLAGLDQLGKDVADGAFGPLPSDEDVHGAMERGLIDRVGPEVGGRLRAGRSRNDQVATLFRMWVRDAVRDIALGTTELVDALSAQAKAHADAIMPGKTHFQAAQPVLLAHQLLAHAQPLLRDIDRIRDLDKRLAVSPYGSGALAGSSLKLNPEAIAEELGFDSAADNSIDATSSRDFASETAFVLAQLAVDMSRLAEEIIAWCTPEFGYITLSDSWSTGSSIMPQKKNPDVAELTRGKSGRLIGNLTGLLATLKAQPLAYNRDLQEDKEPIVDSVAQLNLLLPAMTGLVSTLTFNTERMRELAPAGFTLATDLAEWMVRQGVPFREAHEASGACVRIAESRGVDLIDLTDEELSGVDARLTPEVREVLTIDGAVASRATRGGTAGVRVAEQRARVDAASTAHAEWARAGVRR</sequence>